<protein>
    <recommendedName>
        <fullName evidence="1">4-hydroxybenzoate octaprenyltransferase</fullName>
        <ecNumber evidence="1">2.5.1.39</ecNumber>
    </recommendedName>
    <alternativeName>
        <fullName evidence="1">4-HB polyprenyltransferase</fullName>
    </alternativeName>
</protein>
<evidence type="ECO:0000255" key="1">
    <source>
        <dbReference type="HAMAP-Rule" id="MF_01635"/>
    </source>
</evidence>
<organism>
    <name type="scientific">Photobacterium profundum (strain SS9)</name>
    <dbReference type="NCBI Taxonomy" id="298386"/>
    <lineage>
        <taxon>Bacteria</taxon>
        <taxon>Pseudomonadati</taxon>
        <taxon>Pseudomonadota</taxon>
        <taxon>Gammaproteobacteria</taxon>
        <taxon>Vibrionales</taxon>
        <taxon>Vibrionaceae</taxon>
        <taxon>Photobacterium</taxon>
    </lineage>
</organism>
<reference key="1">
    <citation type="journal article" date="2005" name="Science">
        <title>Life at depth: Photobacterium profundum genome sequence and expression analysis.</title>
        <authorList>
            <person name="Vezzi A."/>
            <person name="Campanaro S."/>
            <person name="D'Angelo M."/>
            <person name="Simonato F."/>
            <person name="Vitulo N."/>
            <person name="Lauro F.M."/>
            <person name="Cestaro A."/>
            <person name="Malacrida G."/>
            <person name="Simionati B."/>
            <person name="Cannata N."/>
            <person name="Romualdi C."/>
            <person name="Bartlett D.H."/>
            <person name="Valle G."/>
        </authorList>
    </citation>
    <scope>NUCLEOTIDE SEQUENCE [LARGE SCALE GENOMIC DNA]</scope>
    <source>
        <strain>ATCC BAA-1253 / SS9</strain>
    </source>
</reference>
<sequence>MLAMTKAKAFCQLARFDRPIGSLLLLWPTLWALFLAADGLPNMHVLVVFVLGVVFMRAAGCVINDFADRNFDGHVKRTAKRPMPSGKISEREALGLFGLLVLVSFVLVLTMNTLTIMLSVVGLVLAAAYPFMKRYTHLPQLVLGMAFGWSIPMAYAAQAGELPVVAWLLFTANILWTIAYDTQYAMVDRDDDLKVGIKSAAILFGRFDKIIIGVLQLSTLVTMILIGHSLDLHQIYYWFLLMASGLFVYQQRLIGSREREPCFKAFLNNNYVGMLIFLGIAISVMMQ</sequence>
<accession>Q6LVS3</accession>
<proteinExistence type="inferred from homology"/>
<dbReference type="EC" id="2.5.1.39" evidence="1"/>
<dbReference type="EMBL" id="CR378663">
    <property type="protein sequence ID" value="CAG18602.1"/>
    <property type="molecule type" value="Genomic_DNA"/>
</dbReference>
<dbReference type="RefSeq" id="WP_011216980.1">
    <property type="nucleotide sequence ID" value="NC_006370.1"/>
</dbReference>
<dbReference type="SMR" id="Q6LVS3"/>
<dbReference type="STRING" id="298386.PBPRA0163"/>
<dbReference type="KEGG" id="ppr:PBPRA0163"/>
<dbReference type="eggNOG" id="COG0382">
    <property type="taxonomic scope" value="Bacteria"/>
</dbReference>
<dbReference type="HOGENOM" id="CLU_034879_1_0_6"/>
<dbReference type="UniPathway" id="UPA00232"/>
<dbReference type="Proteomes" id="UP000000593">
    <property type="component" value="Chromosome 1"/>
</dbReference>
<dbReference type="GO" id="GO:0005886">
    <property type="term" value="C:plasma membrane"/>
    <property type="evidence" value="ECO:0007669"/>
    <property type="project" value="UniProtKB-SubCell"/>
</dbReference>
<dbReference type="GO" id="GO:0008412">
    <property type="term" value="F:4-hydroxybenzoate polyprenyltransferase activity"/>
    <property type="evidence" value="ECO:0007669"/>
    <property type="project" value="UniProtKB-UniRule"/>
</dbReference>
<dbReference type="GO" id="GO:0006744">
    <property type="term" value="P:ubiquinone biosynthetic process"/>
    <property type="evidence" value="ECO:0007669"/>
    <property type="project" value="UniProtKB-UniRule"/>
</dbReference>
<dbReference type="CDD" id="cd13959">
    <property type="entry name" value="PT_UbiA_COQ2"/>
    <property type="match status" value="1"/>
</dbReference>
<dbReference type="FunFam" id="1.10.357.140:FF:000002">
    <property type="entry name" value="4-hydroxybenzoate octaprenyltransferase"/>
    <property type="match status" value="1"/>
</dbReference>
<dbReference type="FunFam" id="1.20.120.1780:FF:000001">
    <property type="entry name" value="4-hydroxybenzoate octaprenyltransferase"/>
    <property type="match status" value="1"/>
</dbReference>
<dbReference type="Gene3D" id="1.10.357.140">
    <property type="entry name" value="UbiA prenyltransferase"/>
    <property type="match status" value="1"/>
</dbReference>
<dbReference type="Gene3D" id="1.20.120.1780">
    <property type="entry name" value="UbiA prenyltransferase"/>
    <property type="match status" value="1"/>
</dbReference>
<dbReference type="HAMAP" id="MF_01635">
    <property type="entry name" value="UbiA"/>
    <property type="match status" value="1"/>
</dbReference>
<dbReference type="InterPro" id="IPR006370">
    <property type="entry name" value="HB_polyprenyltransferase-like"/>
</dbReference>
<dbReference type="InterPro" id="IPR039653">
    <property type="entry name" value="Prenyltransferase"/>
</dbReference>
<dbReference type="InterPro" id="IPR000537">
    <property type="entry name" value="UbiA_prenyltransferase"/>
</dbReference>
<dbReference type="InterPro" id="IPR030470">
    <property type="entry name" value="UbiA_prenylTrfase_CS"/>
</dbReference>
<dbReference type="InterPro" id="IPR044878">
    <property type="entry name" value="UbiA_sf"/>
</dbReference>
<dbReference type="NCBIfam" id="TIGR01474">
    <property type="entry name" value="ubiA_proteo"/>
    <property type="match status" value="1"/>
</dbReference>
<dbReference type="PANTHER" id="PTHR11048:SF28">
    <property type="entry name" value="4-HYDROXYBENZOATE POLYPRENYLTRANSFERASE, MITOCHONDRIAL"/>
    <property type="match status" value="1"/>
</dbReference>
<dbReference type="PANTHER" id="PTHR11048">
    <property type="entry name" value="PRENYLTRANSFERASES"/>
    <property type="match status" value="1"/>
</dbReference>
<dbReference type="Pfam" id="PF01040">
    <property type="entry name" value="UbiA"/>
    <property type="match status" value="1"/>
</dbReference>
<dbReference type="PROSITE" id="PS00943">
    <property type="entry name" value="UBIA"/>
    <property type="match status" value="1"/>
</dbReference>
<gene>
    <name evidence="1" type="primary">ubiA</name>
    <name type="ordered locus">PBPRA0163</name>
</gene>
<comment type="function">
    <text evidence="1">Catalyzes the prenylation of para-hydroxybenzoate (PHB) with an all-trans polyprenyl group. Mediates the second step in the final reaction sequence of ubiquinone-8 (UQ-8) biosynthesis, which is the condensation of the polyisoprenoid side chain with PHB, generating the first membrane-bound Q intermediate 3-octaprenyl-4-hydroxybenzoate.</text>
</comment>
<comment type="catalytic activity">
    <reaction evidence="1">
        <text>all-trans-octaprenyl diphosphate + 4-hydroxybenzoate = 4-hydroxy-3-(all-trans-octaprenyl)benzoate + diphosphate</text>
        <dbReference type="Rhea" id="RHEA:27782"/>
        <dbReference type="ChEBI" id="CHEBI:1617"/>
        <dbReference type="ChEBI" id="CHEBI:17879"/>
        <dbReference type="ChEBI" id="CHEBI:33019"/>
        <dbReference type="ChEBI" id="CHEBI:57711"/>
        <dbReference type="EC" id="2.5.1.39"/>
    </reaction>
</comment>
<comment type="cofactor">
    <cofactor evidence="1">
        <name>Mg(2+)</name>
        <dbReference type="ChEBI" id="CHEBI:18420"/>
    </cofactor>
</comment>
<comment type="pathway">
    <text evidence="1">Cofactor biosynthesis; ubiquinone biosynthesis.</text>
</comment>
<comment type="subcellular location">
    <subcellularLocation>
        <location evidence="1">Cell inner membrane</location>
        <topology evidence="1">Multi-pass membrane protein</topology>
    </subcellularLocation>
</comment>
<comment type="similarity">
    <text evidence="1">Belongs to the UbiA prenyltransferase family.</text>
</comment>
<keyword id="KW-0997">Cell inner membrane</keyword>
<keyword id="KW-1003">Cell membrane</keyword>
<keyword id="KW-0460">Magnesium</keyword>
<keyword id="KW-0472">Membrane</keyword>
<keyword id="KW-1185">Reference proteome</keyword>
<keyword id="KW-0808">Transferase</keyword>
<keyword id="KW-0812">Transmembrane</keyword>
<keyword id="KW-1133">Transmembrane helix</keyword>
<keyword id="KW-0831">Ubiquinone biosynthesis</keyword>
<feature type="chain" id="PRO_0000262814" description="4-hydroxybenzoate octaprenyltransferase">
    <location>
        <begin position="1"/>
        <end position="287"/>
    </location>
</feature>
<feature type="transmembrane region" description="Helical" evidence="1">
    <location>
        <begin position="20"/>
        <end position="40"/>
    </location>
</feature>
<feature type="transmembrane region" description="Helical" evidence="1">
    <location>
        <begin position="43"/>
        <end position="63"/>
    </location>
</feature>
<feature type="transmembrane region" description="Helical" evidence="1">
    <location>
        <begin position="94"/>
        <end position="114"/>
    </location>
</feature>
<feature type="transmembrane region" description="Helical" evidence="1">
    <location>
        <begin position="115"/>
        <end position="135"/>
    </location>
</feature>
<feature type="transmembrane region" description="Helical" evidence="1">
    <location>
        <begin position="137"/>
        <end position="157"/>
    </location>
</feature>
<feature type="transmembrane region" description="Helical" evidence="1">
    <location>
        <begin position="159"/>
        <end position="179"/>
    </location>
</feature>
<feature type="transmembrane region" description="Helical" evidence="1">
    <location>
        <begin position="210"/>
        <end position="230"/>
    </location>
</feature>
<feature type="transmembrane region" description="Helical" evidence="1">
    <location>
        <begin position="235"/>
        <end position="255"/>
    </location>
</feature>
<feature type="transmembrane region" description="Helical" evidence="1">
    <location>
        <begin position="266"/>
        <end position="286"/>
    </location>
</feature>
<name>UBIA_PHOPR</name>